<feature type="chain" id="PRO_0000288500" description="TBC1 domain family member 9">
    <location>
        <begin position="1"/>
        <end position="1264"/>
    </location>
</feature>
<feature type="domain" description="GRAM 1">
    <location>
        <begin position="146"/>
        <end position="213"/>
    </location>
</feature>
<feature type="domain" description="GRAM 2">
    <location>
        <begin position="293"/>
        <end position="361"/>
    </location>
</feature>
<feature type="domain" description="Rab-GAP TBC" evidence="2">
    <location>
        <begin position="515"/>
        <end position="702"/>
    </location>
</feature>
<feature type="domain" description="EF-hand" evidence="3">
    <location>
        <begin position="886"/>
        <end position="921"/>
    </location>
</feature>
<feature type="region of interest" description="Disordered" evidence="4">
    <location>
        <begin position="410"/>
        <end position="456"/>
    </location>
</feature>
<feature type="region of interest" description="Disordered" evidence="4">
    <location>
        <begin position="1119"/>
        <end position="1162"/>
    </location>
</feature>
<feature type="compositionally biased region" description="Low complexity" evidence="4">
    <location>
        <begin position="425"/>
        <end position="441"/>
    </location>
</feature>
<feature type="compositionally biased region" description="Basic and acidic residues" evidence="4">
    <location>
        <begin position="1119"/>
        <end position="1138"/>
    </location>
</feature>
<feature type="site" description="Arginine finger" evidence="1">
    <location>
        <position position="562"/>
    </location>
</feature>
<feature type="site" description="Glutamine finger" evidence="1">
    <location>
        <position position="601"/>
    </location>
</feature>
<feature type="splice variant" id="VSP_025698" description="In isoform 2." evidence="5">
    <location>
        <begin position="121"/>
        <end position="353"/>
    </location>
</feature>
<feature type="sequence conflict" description="In Ref. 1; BAE22209." evidence="6" ref="1">
    <original>N</original>
    <variation>S</variation>
    <location>
        <position position="376"/>
    </location>
</feature>
<feature type="sequence conflict" description="In Ref. 1; BAE22209." evidence="6" ref="1">
    <original>T</original>
    <variation>N</variation>
    <location>
        <position position="465"/>
    </location>
</feature>
<feature type="sequence conflict" description="In Ref. 2; BAD32328." evidence="6" ref="2">
    <original>G</original>
    <variation>D</variation>
    <location>
        <position position="544"/>
    </location>
</feature>
<feature type="sequence conflict" description="In Ref. 1; BAC36601." evidence="6" ref="1">
    <original>A</original>
    <variation>R</variation>
    <location>
        <position position="1261"/>
    </location>
</feature>
<gene>
    <name type="primary">Tbc1d9</name>
    <name type="synonym">Kiaa0882</name>
</gene>
<keyword id="KW-0025">Alternative splicing</keyword>
<keyword id="KW-0343">GTPase activation</keyword>
<keyword id="KW-1185">Reference proteome</keyword>
<keyword id="KW-0677">Repeat</keyword>
<reference key="1">
    <citation type="journal article" date="2005" name="Science">
        <title>The transcriptional landscape of the mammalian genome.</title>
        <authorList>
            <person name="Carninci P."/>
            <person name="Kasukawa T."/>
            <person name="Katayama S."/>
            <person name="Gough J."/>
            <person name="Frith M.C."/>
            <person name="Maeda N."/>
            <person name="Oyama R."/>
            <person name="Ravasi T."/>
            <person name="Lenhard B."/>
            <person name="Wells C."/>
            <person name="Kodzius R."/>
            <person name="Shimokawa K."/>
            <person name="Bajic V.B."/>
            <person name="Brenner S.E."/>
            <person name="Batalov S."/>
            <person name="Forrest A.R."/>
            <person name="Zavolan M."/>
            <person name="Davis M.J."/>
            <person name="Wilming L.G."/>
            <person name="Aidinis V."/>
            <person name="Allen J.E."/>
            <person name="Ambesi-Impiombato A."/>
            <person name="Apweiler R."/>
            <person name="Aturaliya R.N."/>
            <person name="Bailey T.L."/>
            <person name="Bansal M."/>
            <person name="Baxter L."/>
            <person name="Beisel K.W."/>
            <person name="Bersano T."/>
            <person name="Bono H."/>
            <person name="Chalk A.M."/>
            <person name="Chiu K.P."/>
            <person name="Choudhary V."/>
            <person name="Christoffels A."/>
            <person name="Clutterbuck D.R."/>
            <person name="Crowe M.L."/>
            <person name="Dalla E."/>
            <person name="Dalrymple B.P."/>
            <person name="de Bono B."/>
            <person name="Della Gatta G."/>
            <person name="di Bernardo D."/>
            <person name="Down T."/>
            <person name="Engstrom P."/>
            <person name="Fagiolini M."/>
            <person name="Faulkner G."/>
            <person name="Fletcher C.F."/>
            <person name="Fukushima T."/>
            <person name="Furuno M."/>
            <person name="Futaki S."/>
            <person name="Gariboldi M."/>
            <person name="Georgii-Hemming P."/>
            <person name="Gingeras T.R."/>
            <person name="Gojobori T."/>
            <person name="Green R.E."/>
            <person name="Gustincich S."/>
            <person name="Harbers M."/>
            <person name="Hayashi Y."/>
            <person name="Hensch T.K."/>
            <person name="Hirokawa N."/>
            <person name="Hill D."/>
            <person name="Huminiecki L."/>
            <person name="Iacono M."/>
            <person name="Ikeo K."/>
            <person name="Iwama A."/>
            <person name="Ishikawa T."/>
            <person name="Jakt M."/>
            <person name="Kanapin A."/>
            <person name="Katoh M."/>
            <person name="Kawasawa Y."/>
            <person name="Kelso J."/>
            <person name="Kitamura H."/>
            <person name="Kitano H."/>
            <person name="Kollias G."/>
            <person name="Krishnan S.P."/>
            <person name="Kruger A."/>
            <person name="Kummerfeld S.K."/>
            <person name="Kurochkin I.V."/>
            <person name="Lareau L.F."/>
            <person name="Lazarevic D."/>
            <person name="Lipovich L."/>
            <person name="Liu J."/>
            <person name="Liuni S."/>
            <person name="McWilliam S."/>
            <person name="Madan Babu M."/>
            <person name="Madera M."/>
            <person name="Marchionni L."/>
            <person name="Matsuda H."/>
            <person name="Matsuzawa S."/>
            <person name="Miki H."/>
            <person name="Mignone F."/>
            <person name="Miyake S."/>
            <person name="Morris K."/>
            <person name="Mottagui-Tabar S."/>
            <person name="Mulder N."/>
            <person name="Nakano N."/>
            <person name="Nakauchi H."/>
            <person name="Ng P."/>
            <person name="Nilsson R."/>
            <person name="Nishiguchi S."/>
            <person name="Nishikawa S."/>
            <person name="Nori F."/>
            <person name="Ohara O."/>
            <person name="Okazaki Y."/>
            <person name="Orlando V."/>
            <person name="Pang K.C."/>
            <person name="Pavan W.J."/>
            <person name="Pavesi G."/>
            <person name="Pesole G."/>
            <person name="Petrovsky N."/>
            <person name="Piazza S."/>
            <person name="Reed J."/>
            <person name="Reid J.F."/>
            <person name="Ring B.Z."/>
            <person name="Ringwald M."/>
            <person name="Rost B."/>
            <person name="Ruan Y."/>
            <person name="Salzberg S.L."/>
            <person name="Sandelin A."/>
            <person name="Schneider C."/>
            <person name="Schoenbach C."/>
            <person name="Sekiguchi K."/>
            <person name="Semple C.A."/>
            <person name="Seno S."/>
            <person name="Sessa L."/>
            <person name="Sheng Y."/>
            <person name="Shibata Y."/>
            <person name="Shimada H."/>
            <person name="Shimada K."/>
            <person name="Silva D."/>
            <person name="Sinclair B."/>
            <person name="Sperling S."/>
            <person name="Stupka E."/>
            <person name="Sugiura K."/>
            <person name="Sultana R."/>
            <person name="Takenaka Y."/>
            <person name="Taki K."/>
            <person name="Tammoja K."/>
            <person name="Tan S.L."/>
            <person name="Tang S."/>
            <person name="Taylor M.S."/>
            <person name="Tegner J."/>
            <person name="Teichmann S.A."/>
            <person name="Ueda H.R."/>
            <person name="van Nimwegen E."/>
            <person name="Verardo R."/>
            <person name="Wei C.L."/>
            <person name="Yagi K."/>
            <person name="Yamanishi H."/>
            <person name="Zabarovsky E."/>
            <person name="Zhu S."/>
            <person name="Zimmer A."/>
            <person name="Hide W."/>
            <person name="Bult C."/>
            <person name="Grimmond S.M."/>
            <person name="Teasdale R.D."/>
            <person name="Liu E.T."/>
            <person name="Brusic V."/>
            <person name="Quackenbush J."/>
            <person name="Wahlestedt C."/>
            <person name="Mattick J.S."/>
            <person name="Hume D.A."/>
            <person name="Kai C."/>
            <person name="Sasaki D."/>
            <person name="Tomaru Y."/>
            <person name="Fukuda S."/>
            <person name="Kanamori-Katayama M."/>
            <person name="Suzuki M."/>
            <person name="Aoki J."/>
            <person name="Arakawa T."/>
            <person name="Iida J."/>
            <person name="Imamura K."/>
            <person name="Itoh M."/>
            <person name="Kato T."/>
            <person name="Kawaji H."/>
            <person name="Kawagashira N."/>
            <person name="Kawashima T."/>
            <person name="Kojima M."/>
            <person name="Kondo S."/>
            <person name="Konno H."/>
            <person name="Nakano K."/>
            <person name="Ninomiya N."/>
            <person name="Nishio T."/>
            <person name="Okada M."/>
            <person name="Plessy C."/>
            <person name="Shibata K."/>
            <person name="Shiraki T."/>
            <person name="Suzuki S."/>
            <person name="Tagami M."/>
            <person name="Waki K."/>
            <person name="Watahiki A."/>
            <person name="Okamura-Oho Y."/>
            <person name="Suzuki H."/>
            <person name="Kawai J."/>
            <person name="Hayashizaki Y."/>
        </authorList>
    </citation>
    <scope>NUCLEOTIDE SEQUENCE [LARGE SCALE MRNA] (ISOFORMS 1 AND 2)</scope>
    <source>
        <strain>C57BL/6J</strain>
        <tissue>Cerebellum</tissue>
        <tissue>Medulla oblongata</tissue>
    </source>
</reference>
<reference key="2">
    <citation type="journal article" date="2004" name="DNA Res.">
        <title>Prediction of the coding sequences of mouse homologues of KIAA gene: IV. The complete nucleotide sequences of 500 mouse KIAA-homologous cDNAs identified by screening of terminal sequences of cDNA clones randomly sampled from size-fractionated libraries.</title>
        <authorList>
            <person name="Okazaki N."/>
            <person name="Kikuno R."/>
            <person name="Ohara R."/>
            <person name="Inamoto S."/>
            <person name="Koseki H."/>
            <person name="Hiraoka S."/>
            <person name="Saga Y."/>
            <person name="Seino S."/>
            <person name="Nishimura M."/>
            <person name="Kaisho T."/>
            <person name="Hoshino K."/>
            <person name="Kitamura H."/>
            <person name="Nagase T."/>
            <person name="Ohara O."/>
            <person name="Koga H."/>
        </authorList>
    </citation>
    <scope>NUCLEOTIDE SEQUENCE [LARGE SCALE MRNA] OF 36-1264 (ISOFORM 1)</scope>
    <source>
        <tissue>Fetal brain</tissue>
    </source>
</reference>
<dbReference type="EMBL" id="AK017015">
    <property type="protein sequence ID" value="BAB30550.1"/>
    <property type="molecule type" value="mRNA"/>
</dbReference>
<dbReference type="EMBL" id="AK049049">
    <property type="protein sequence ID" value="BAC33525.1"/>
    <property type="molecule type" value="mRNA"/>
</dbReference>
<dbReference type="EMBL" id="AK077081">
    <property type="protein sequence ID" value="BAC36601.1"/>
    <property type="molecule type" value="mRNA"/>
</dbReference>
<dbReference type="EMBL" id="AK134614">
    <property type="protein sequence ID" value="BAE22209.1"/>
    <property type="molecule type" value="mRNA"/>
</dbReference>
<dbReference type="EMBL" id="AK173050">
    <property type="protein sequence ID" value="BAD32328.1"/>
    <property type="molecule type" value="mRNA"/>
</dbReference>
<dbReference type="CCDS" id="CCDS22448.1">
    <molecule id="Q3UYK3-2"/>
</dbReference>
<dbReference type="CCDS" id="CCDS52607.1">
    <molecule id="Q3UYK3-1"/>
</dbReference>
<dbReference type="RefSeq" id="NP_001104774.1">
    <molecule id="Q3UYK3-1"/>
    <property type="nucleotide sequence ID" value="NM_001111304.1"/>
</dbReference>
<dbReference type="RefSeq" id="NP_082034.1">
    <molecule id="Q3UYK3-2"/>
    <property type="nucleotide sequence ID" value="NM_027758.4"/>
</dbReference>
<dbReference type="SMR" id="Q3UYK3"/>
<dbReference type="BioGRID" id="214627">
    <property type="interactions" value="6"/>
</dbReference>
<dbReference type="FunCoup" id="Q3UYK3">
    <property type="interactions" value="1833"/>
</dbReference>
<dbReference type="STRING" id="10090.ENSMUSP00000091093"/>
<dbReference type="GlyGen" id="Q3UYK3">
    <property type="glycosylation" value="2 sites, 1 O-linked glycan (2 sites)"/>
</dbReference>
<dbReference type="iPTMnet" id="Q3UYK3"/>
<dbReference type="PhosphoSitePlus" id="Q3UYK3"/>
<dbReference type="jPOST" id="Q3UYK3"/>
<dbReference type="PaxDb" id="10090-ENSMUSP00000091093"/>
<dbReference type="PeptideAtlas" id="Q3UYK3"/>
<dbReference type="ProteomicsDB" id="254664">
    <molecule id="Q3UYK3-1"/>
</dbReference>
<dbReference type="ProteomicsDB" id="254665">
    <molecule id="Q3UYK3-2"/>
</dbReference>
<dbReference type="Antibodypedia" id="27252">
    <property type="antibodies" value="86 antibodies from 18 providers"/>
</dbReference>
<dbReference type="DNASU" id="71310"/>
<dbReference type="Ensembl" id="ENSMUST00000034145.11">
    <molecule id="Q3UYK3-2"/>
    <property type="protein sequence ID" value="ENSMUSP00000034145.5"/>
    <property type="gene ID" value="ENSMUSG00000031709.16"/>
</dbReference>
<dbReference type="Ensembl" id="ENSMUST00000093393.5">
    <molecule id="Q3UYK3-1"/>
    <property type="protein sequence ID" value="ENSMUSP00000091093.5"/>
    <property type="gene ID" value="ENSMUSG00000031709.16"/>
</dbReference>
<dbReference type="GeneID" id="71310"/>
<dbReference type="KEGG" id="mmu:71310"/>
<dbReference type="UCSC" id="uc009mju.2">
    <molecule id="Q3UYK3-2"/>
    <property type="organism name" value="mouse"/>
</dbReference>
<dbReference type="UCSC" id="uc009mjv.2">
    <molecule id="Q3UYK3-1"/>
    <property type="organism name" value="mouse"/>
</dbReference>
<dbReference type="AGR" id="MGI:1918560"/>
<dbReference type="CTD" id="23158"/>
<dbReference type="MGI" id="MGI:1918560">
    <property type="gene designation" value="Tbc1d9"/>
</dbReference>
<dbReference type="VEuPathDB" id="HostDB:ENSMUSG00000031709"/>
<dbReference type="eggNOG" id="KOG4347">
    <property type="taxonomic scope" value="Eukaryota"/>
</dbReference>
<dbReference type="GeneTree" id="ENSGT00940000157878"/>
<dbReference type="HOGENOM" id="CLU_003535_1_1_1"/>
<dbReference type="InParanoid" id="Q3UYK3"/>
<dbReference type="OMA" id="HMCFYAY"/>
<dbReference type="OrthoDB" id="17687at2759"/>
<dbReference type="PhylomeDB" id="Q3UYK3"/>
<dbReference type="TreeFam" id="TF313145"/>
<dbReference type="BioGRID-ORCS" id="71310">
    <property type="hits" value="1 hit in 77 CRISPR screens"/>
</dbReference>
<dbReference type="ChiTaRS" id="Tbc1d9">
    <property type="organism name" value="mouse"/>
</dbReference>
<dbReference type="PRO" id="PR:Q3UYK3"/>
<dbReference type="Proteomes" id="UP000000589">
    <property type="component" value="Chromosome 8"/>
</dbReference>
<dbReference type="RNAct" id="Q3UYK3">
    <property type="molecule type" value="protein"/>
</dbReference>
<dbReference type="Bgee" id="ENSMUSG00000031709">
    <property type="expression patterns" value="Expressed in choroid plexus epithelium and 199 other cell types or tissues"/>
</dbReference>
<dbReference type="GO" id="GO:0005509">
    <property type="term" value="F:calcium ion binding"/>
    <property type="evidence" value="ECO:0007669"/>
    <property type="project" value="InterPro"/>
</dbReference>
<dbReference type="GO" id="GO:0005096">
    <property type="term" value="F:GTPase activator activity"/>
    <property type="evidence" value="ECO:0007669"/>
    <property type="project" value="UniProtKB-KW"/>
</dbReference>
<dbReference type="CDD" id="cd13351">
    <property type="entry name" value="PH-GRAM1_TCB1D9_TCB1D9B"/>
    <property type="match status" value="1"/>
</dbReference>
<dbReference type="CDD" id="cd13354">
    <property type="entry name" value="PH-GRAM2_TCB1D9_TCB1D9B"/>
    <property type="match status" value="1"/>
</dbReference>
<dbReference type="FunFam" id="2.30.29.30:FF:000013">
    <property type="entry name" value="Putative TBC1 domain family member 8B"/>
    <property type="match status" value="1"/>
</dbReference>
<dbReference type="FunFam" id="1.10.10.750:FF:000008">
    <property type="entry name" value="TBC1 domain family member 9"/>
    <property type="match status" value="1"/>
</dbReference>
<dbReference type="FunFam" id="1.10.238.10:FF:000119">
    <property type="entry name" value="TBC1 domain family member 9"/>
    <property type="match status" value="1"/>
</dbReference>
<dbReference type="FunFam" id="2.30.29.30:FF:000041">
    <property type="entry name" value="TBC1 domain family member 9 isoform X1"/>
    <property type="match status" value="1"/>
</dbReference>
<dbReference type="FunFam" id="1.10.8.270:FF:000002">
    <property type="entry name" value="TBC1 domain family member 9B"/>
    <property type="match status" value="1"/>
</dbReference>
<dbReference type="FunFam" id="1.10.472.80:FF:000016">
    <property type="entry name" value="TBC1 domain family, member 9"/>
    <property type="match status" value="1"/>
</dbReference>
<dbReference type="Gene3D" id="1.10.238.10">
    <property type="entry name" value="EF-hand"/>
    <property type="match status" value="1"/>
</dbReference>
<dbReference type="Gene3D" id="2.30.29.30">
    <property type="entry name" value="Pleckstrin-homology domain (PH domain)/Phosphotyrosine-binding domain (PTB)"/>
    <property type="match status" value="2"/>
</dbReference>
<dbReference type="Gene3D" id="1.10.8.270">
    <property type="entry name" value="putative rabgap domain of human tbc1 domain family member 14 like domains"/>
    <property type="match status" value="1"/>
</dbReference>
<dbReference type="Gene3D" id="1.10.10.750">
    <property type="entry name" value="Ypt/Rab-GAP domain of gyp1p, domain 1"/>
    <property type="match status" value="1"/>
</dbReference>
<dbReference type="Gene3D" id="1.10.472.80">
    <property type="entry name" value="Ypt/Rab-GAP domain of gyp1p, domain 3"/>
    <property type="match status" value="1"/>
</dbReference>
<dbReference type="InterPro" id="IPR011992">
    <property type="entry name" value="EF-hand-dom_pair"/>
</dbReference>
<dbReference type="InterPro" id="IPR002048">
    <property type="entry name" value="EF_hand_dom"/>
</dbReference>
<dbReference type="InterPro" id="IPR004182">
    <property type="entry name" value="GRAM"/>
</dbReference>
<dbReference type="InterPro" id="IPR011993">
    <property type="entry name" value="PH-like_dom_sf"/>
</dbReference>
<dbReference type="InterPro" id="IPR000195">
    <property type="entry name" value="Rab-GAP-TBC_dom"/>
</dbReference>
<dbReference type="InterPro" id="IPR035969">
    <property type="entry name" value="Rab-GAP_TBC_sf"/>
</dbReference>
<dbReference type="InterPro" id="IPR036014">
    <property type="entry name" value="TCB1D9/TCB1D9B_PH-GRAM1"/>
</dbReference>
<dbReference type="InterPro" id="IPR036017">
    <property type="entry name" value="TCB1D9/TCB1D9B_PH-GRAM2"/>
</dbReference>
<dbReference type="PANTHER" id="PTHR47666">
    <property type="entry name" value="PROTEIN VASCULAR ASSOCIATED DEATH 1, CHLOROPLASTIC"/>
    <property type="match status" value="1"/>
</dbReference>
<dbReference type="PANTHER" id="PTHR47666:SF3">
    <property type="entry name" value="TBC1 DOMAIN FAMILY MEMBER 9"/>
    <property type="match status" value="1"/>
</dbReference>
<dbReference type="Pfam" id="PF02893">
    <property type="entry name" value="GRAM"/>
    <property type="match status" value="2"/>
</dbReference>
<dbReference type="Pfam" id="PF00566">
    <property type="entry name" value="RabGAP-TBC"/>
    <property type="match status" value="1"/>
</dbReference>
<dbReference type="SMART" id="SM00568">
    <property type="entry name" value="GRAM"/>
    <property type="match status" value="2"/>
</dbReference>
<dbReference type="SMART" id="SM00164">
    <property type="entry name" value="TBC"/>
    <property type="match status" value="1"/>
</dbReference>
<dbReference type="SUPFAM" id="SSF47473">
    <property type="entry name" value="EF-hand"/>
    <property type="match status" value="1"/>
</dbReference>
<dbReference type="SUPFAM" id="SSF47923">
    <property type="entry name" value="Ypt/Rab-GAP domain of gyp1p"/>
    <property type="match status" value="2"/>
</dbReference>
<dbReference type="PROSITE" id="PS50222">
    <property type="entry name" value="EF_HAND_2"/>
    <property type="match status" value="1"/>
</dbReference>
<dbReference type="PROSITE" id="PS50086">
    <property type="entry name" value="TBC_RABGAP"/>
    <property type="match status" value="1"/>
</dbReference>
<name>TBCD9_MOUSE</name>
<comment type="function">
    <text>May act as a GTPase-activating protein for Rab family protein(s).</text>
</comment>
<comment type="alternative products">
    <event type="alternative splicing"/>
    <isoform>
        <id>Q3UYK3-1</id>
        <name>1</name>
        <sequence type="displayed"/>
    </isoform>
    <isoform>
        <id>Q3UYK3-2</id>
        <name>2</name>
        <sequence type="described" ref="VSP_025698"/>
    </isoform>
</comment>
<comment type="domain">
    <text evidence="1">The arginine and glutamine fingers are critical for the GTPase-activating mechanism, they pull out Rab's 'switch 2' glutamine and insert in Rab's active site.</text>
</comment>
<organism>
    <name type="scientific">Mus musculus</name>
    <name type="common">Mouse</name>
    <dbReference type="NCBI Taxonomy" id="10090"/>
    <lineage>
        <taxon>Eukaryota</taxon>
        <taxon>Metazoa</taxon>
        <taxon>Chordata</taxon>
        <taxon>Craniata</taxon>
        <taxon>Vertebrata</taxon>
        <taxon>Euteleostomi</taxon>
        <taxon>Mammalia</taxon>
        <taxon>Eutheria</taxon>
        <taxon>Euarchontoglires</taxon>
        <taxon>Glires</taxon>
        <taxon>Rodentia</taxon>
        <taxon>Myomorpha</taxon>
        <taxon>Muroidea</taxon>
        <taxon>Muridae</taxon>
        <taxon>Murinae</taxon>
        <taxon>Mus</taxon>
        <taxon>Mus</taxon>
    </lineage>
</organism>
<proteinExistence type="evidence at transcript level"/>
<evidence type="ECO:0000250" key="1"/>
<evidence type="ECO:0000255" key="2">
    <source>
        <dbReference type="PROSITE-ProRule" id="PRU00163"/>
    </source>
</evidence>
<evidence type="ECO:0000255" key="3">
    <source>
        <dbReference type="PROSITE-ProRule" id="PRU00448"/>
    </source>
</evidence>
<evidence type="ECO:0000256" key="4">
    <source>
        <dbReference type="SAM" id="MobiDB-lite"/>
    </source>
</evidence>
<evidence type="ECO:0000303" key="5">
    <source>
    </source>
</evidence>
<evidence type="ECO:0000305" key="6"/>
<accession>Q3UYK3</accession>
<accession>Q69ZW8</accession>
<accession>Q8BIJ5</accession>
<accession>Q8BVP3</accession>
<accession>Q9CUB3</accession>
<sequence length="1264" mass="143024">MWVNPEEVLLANALWITERANPYFILQRRKGHGGDGGGGGGLAGLLVGTLDVVLDSSARVAPYRILYQTPDSLVYWTIACGGSRKEVTEHWEWLEQNLLQTLSIFENENDVTTFVRGKIQGIIAEYNKINDVKEDEDTEKFKEAIVKFHRLFGMPEEEKLVNYYSCSYWKGRVPRQGWMYLSINHLCFSSFLMGREAKLVIRWVDITQLEKNATLLLPDMIKVSTRSSEHFFSVFLNINETFKLMEQLANIAMRQLLDNEGFEQDRSLPKLKKKSPKKVSALKRDLDARAKSERYRALFRLPKDEKLDGHTDCTLWTPFNKMHILGQMFVSTNYICFTSKEENLCSLIIPLREVTIVEKADSCSVLPSPLSISTRNRMTFLFANLKDRDFLVQRISDFLQQTTSRIYSDKEFSGSCNSSDDEVYSRPSSLVSSSPQRSTSSDADGERPFNLNGNSVPTATQTLMTMYRRRSPEEFNPKLAKEFLKEQAWKIHFAEYGQGICMYRTEKTRELVLKGIPESMRGELWLLLSGAINEKATHPGYYEGLVEKSMGKYNLATEEIERDLHRSLPEHPAFQNEMGIAALRRVLTAYAFRNPNIGYCQAMNIVTSVLLLYAKEEEAFWLLVALCERMLPDYYNTRVVGALVDQGVFEELARDYVPQLYDCMQDLGVISTISLSWFLTLFLSVMPFESAVVVVDCFFYEGIKVIFQLALAVLDANVDKLLNCKDDGEAMTVLGRYLDSVTNKDSTLPPIPHLHSLLSDDVGPYPAVDIFRLIGTSYEKFGTIRADLIEQMRFKQRLKVIQTLEDTTKRNVVRTIVTETSFTIDELEELYALFKAEHLTSCYWGGSSNALDRHDPSLPYLEQYRIDFEQFKGMFVLLFPWACGTHSDVLASRLFQLLDENGDSLINFREFVSGLSAACHGDLTEKLKLLYKMHVLPEPSCDQDEPDSAFEATQYFFEDITPECTHVVGLDSRGKQSADDGFVTVSLKQDRGKRANSQENRNYLKLWTAENKSKSKTAKDLPKLNQGQFIELCKTMYNMFSEDPNEQELYHATAAVTSLLLEIGEVGKFFITQPAKEDAVPGPPCGQAIPGMLFPKKGSSQSYVVESTEPLTASLAVDSEEHSLGGQMEDIKLEDSSPRDNGACSSMLISDDDTKDDSSMSSYSVLSAGSHEEDKLHCEDIGEDTVLVRSSQGRATLPRSSSLDRDWAITFEQFLASLLTEPALVRYFDKPVCMMARVTSAKNIRMMGKPLTSASDYEISALSG</sequence>
<protein>
    <recommendedName>
        <fullName>TBC1 domain family member 9</fullName>
    </recommendedName>
</protein>